<sequence length="176" mass="20037">MHKKYSCLQIGIHWLVLLLVIIAWSSIELRGFAPRSYQPWMKMIHFSCGIAILVLMMTRILIQLRYPTPPIVPKPSPMIVGLAHVGHWVIYLLFIALPIIGIAILYCRGSSWIAFGLIMPHAEQANFDLADTLKAYHLLLANMSYFVIGLHALAALLHHYVLKDNTLLRMMPKKRG</sequence>
<protein>
    <recommendedName>
        <fullName evidence="1">Probable superoxide oxidase CybB</fullName>
        <shortName evidence="1">SOO</shortName>
        <ecNumber evidence="1">1.10.3.17</ecNumber>
    </recommendedName>
    <alternativeName>
        <fullName evidence="1">Cytochrome b-561</fullName>
    </alternativeName>
    <alternativeName>
        <fullName evidence="1">Cytochrome b561</fullName>
    </alternativeName>
    <alternativeName>
        <fullName evidence="1">Superoxide:quinone oxidoreductase</fullName>
    </alternativeName>
    <alternativeName>
        <fullName evidence="1">Superoxide:ubiquinone oxidoreductase</fullName>
    </alternativeName>
</protein>
<feature type="chain" id="PRO_0000199973" description="Probable superoxide oxidase CybB">
    <location>
        <begin position="1"/>
        <end position="176"/>
    </location>
</feature>
<feature type="transmembrane region" description="Helical" evidence="2">
    <location>
        <begin position="7"/>
        <end position="27"/>
    </location>
</feature>
<feature type="transmembrane region" description="Helical" evidence="2">
    <location>
        <begin position="44"/>
        <end position="64"/>
    </location>
</feature>
<feature type="transmembrane region" description="Helical" evidence="2">
    <location>
        <begin position="85"/>
        <end position="105"/>
    </location>
</feature>
<feature type="transmembrane region" description="Helical" evidence="2">
    <location>
        <begin position="137"/>
        <end position="157"/>
    </location>
</feature>
<feature type="binding site" description="axial binding residue" evidence="1">
    <location>
        <position position="13"/>
    </location>
    <ligand>
        <name>heme b</name>
        <dbReference type="ChEBI" id="CHEBI:60344"/>
        <label>1</label>
    </ligand>
    <ligandPart>
        <name>Fe</name>
        <dbReference type="ChEBI" id="CHEBI:18248"/>
    </ligandPart>
</feature>
<feature type="binding site" description="axial binding residue" evidence="1">
    <location>
        <position position="45"/>
    </location>
    <ligand>
        <name>heme b</name>
        <dbReference type="ChEBI" id="CHEBI:60344"/>
        <label>2</label>
    </ligand>
    <ligandPart>
        <name>Fe</name>
        <dbReference type="ChEBI" id="CHEBI:18248"/>
    </ligandPart>
</feature>
<feature type="binding site" description="axial binding residue" evidence="1">
    <location>
        <position position="137"/>
    </location>
    <ligand>
        <name>heme b</name>
        <dbReference type="ChEBI" id="CHEBI:60344"/>
        <label>2</label>
    </ligand>
    <ligandPart>
        <name>Fe</name>
        <dbReference type="ChEBI" id="CHEBI:18248"/>
    </ligandPart>
</feature>
<feature type="binding site" description="axial binding residue" evidence="1">
    <location>
        <position position="151"/>
    </location>
    <ligand>
        <name>heme b</name>
        <dbReference type="ChEBI" id="CHEBI:60344"/>
        <label>1</label>
    </ligand>
    <ligandPart>
        <name>Fe</name>
        <dbReference type="ChEBI" id="CHEBI:18248"/>
    </ligandPart>
</feature>
<accession>Q9X6B2</accession>
<accession>Q0WBX1</accession>
<organism>
    <name type="scientific">Yersinia pestis</name>
    <dbReference type="NCBI Taxonomy" id="632"/>
    <lineage>
        <taxon>Bacteria</taxon>
        <taxon>Pseudomonadati</taxon>
        <taxon>Pseudomonadota</taxon>
        <taxon>Gammaproteobacteria</taxon>
        <taxon>Enterobacterales</taxon>
        <taxon>Yersiniaceae</taxon>
        <taxon>Yersinia</taxon>
    </lineage>
</organism>
<name>C561_YERPE</name>
<reference key="1">
    <citation type="journal article" date="1999" name="J. Bacteriol.">
        <title>Molecular characterization of KatY (antigen 5), a thermoregulated chromosomally encoded catalase-peroxidase of Yersinia pestis.</title>
        <authorList>
            <person name="Garcia E."/>
            <person name="Nedialkov Y.A."/>
            <person name="Elliott J."/>
            <person name="Motin V.L."/>
            <person name="Brubaker R.R."/>
        </authorList>
    </citation>
    <scope>NUCLEOTIDE SEQUENCE [GENOMIC DNA]</scope>
    <source>
        <strain>KIM</strain>
    </source>
</reference>
<reference key="2">
    <citation type="journal article" date="2001" name="Nature">
        <title>Genome sequence of Yersinia pestis, the causative agent of plague.</title>
        <authorList>
            <person name="Parkhill J."/>
            <person name="Wren B.W."/>
            <person name="Thomson N.R."/>
            <person name="Titball R.W."/>
            <person name="Holden M.T.G."/>
            <person name="Prentice M.B."/>
            <person name="Sebaihia M."/>
            <person name="James K.D."/>
            <person name="Churcher C.M."/>
            <person name="Mungall K.L."/>
            <person name="Baker S."/>
            <person name="Basham D."/>
            <person name="Bentley S.D."/>
            <person name="Brooks K."/>
            <person name="Cerdeno-Tarraga A.-M."/>
            <person name="Chillingworth T."/>
            <person name="Cronin A."/>
            <person name="Davies R.M."/>
            <person name="Davis P."/>
            <person name="Dougan G."/>
            <person name="Feltwell T."/>
            <person name="Hamlin N."/>
            <person name="Holroyd S."/>
            <person name="Jagels K."/>
            <person name="Karlyshev A.V."/>
            <person name="Leather S."/>
            <person name="Moule S."/>
            <person name="Oyston P.C.F."/>
            <person name="Quail M.A."/>
            <person name="Rutherford K.M."/>
            <person name="Simmonds M."/>
            <person name="Skelton J."/>
            <person name="Stevens K."/>
            <person name="Whitehead S."/>
            <person name="Barrell B.G."/>
        </authorList>
    </citation>
    <scope>NUCLEOTIDE SEQUENCE [LARGE SCALE GENOMIC DNA]</scope>
    <source>
        <strain>CO-92 / Biovar Orientalis</strain>
    </source>
</reference>
<reference key="3">
    <citation type="journal article" date="2002" name="J. Bacteriol.">
        <title>Genome sequence of Yersinia pestis KIM.</title>
        <authorList>
            <person name="Deng W."/>
            <person name="Burland V."/>
            <person name="Plunkett G. III"/>
            <person name="Boutin A."/>
            <person name="Mayhew G.F."/>
            <person name="Liss P."/>
            <person name="Perna N.T."/>
            <person name="Rose D.J."/>
            <person name="Mau B."/>
            <person name="Zhou S."/>
            <person name="Schwartz D.C."/>
            <person name="Fetherston J.D."/>
            <person name="Lindler L.E."/>
            <person name="Brubaker R.R."/>
            <person name="Plano G.V."/>
            <person name="Straley S.C."/>
            <person name="McDonough K.A."/>
            <person name="Nilles M.L."/>
            <person name="Matson J.S."/>
            <person name="Blattner F.R."/>
            <person name="Perry R.D."/>
        </authorList>
    </citation>
    <scope>NUCLEOTIDE SEQUENCE [LARGE SCALE GENOMIC DNA]</scope>
    <source>
        <strain>KIM10+ / Biovar Mediaevalis</strain>
    </source>
</reference>
<reference key="4">
    <citation type="journal article" date="2004" name="DNA Res.">
        <title>Complete genome sequence of Yersinia pestis strain 91001, an isolate avirulent to humans.</title>
        <authorList>
            <person name="Song Y."/>
            <person name="Tong Z."/>
            <person name="Wang J."/>
            <person name="Wang L."/>
            <person name="Guo Z."/>
            <person name="Han Y."/>
            <person name="Zhang J."/>
            <person name="Pei D."/>
            <person name="Zhou D."/>
            <person name="Qin H."/>
            <person name="Pang X."/>
            <person name="Han Y."/>
            <person name="Zhai J."/>
            <person name="Li M."/>
            <person name="Cui B."/>
            <person name="Qi Z."/>
            <person name="Jin L."/>
            <person name="Dai R."/>
            <person name="Chen F."/>
            <person name="Li S."/>
            <person name="Ye C."/>
            <person name="Du Z."/>
            <person name="Lin W."/>
            <person name="Wang J."/>
            <person name="Yu J."/>
            <person name="Yang H."/>
            <person name="Wang J."/>
            <person name="Huang P."/>
            <person name="Yang R."/>
        </authorList>
    </citation>
    <scope>NUCLEOTIDE SEQUENCE [LARGE SCALE GENOMIC DNA]</scope>
    <source>
        <strain>91001 / Biovar Mediaevalis</strain>
    </source>
</reference>
<dbReference type="EC" id="1.10.3.17" evidence="1"/>
<dbReference type="EMBL" id="AF135170">
    <property type="protein sequence ID" value="AAD37315.1"/>
    <property type="molecule type" value="Genomic_DNA"/>
</dbReference>
<dbReference type="EMBL" id="AL590842">
    <property type="protein sequence ID" value="CAL21912.1"/>
    <property type="molecule type" value="Genomic_DNA"/>
</dbReference>
<dbReference type="EMBL" id="AE009952">
    <property type="protein sequence ID" value="AAM84453.1"/>
    <property type="status" value="ALT_INIT"/>
    <property type="molecule type" value="Genomic_DNA"/>
</dbReference>
<dbReference type="EMBL" id="AE017042">
    <property type="protein sequence ID" value="AAS60638.1"/>
    <property type="status" value="ALT_INIT"/>
    <property type="molecule type" value="Genomic_DNA"/>
</dbReference>
<dbReference type="PIR" id="AE0403">
    <property type="entry name" value="AE0403"/>
</dbReference>
<dbReference type="RefSeq" id="WP_002215100.1">
    <property type="nucleotide sequence ID" value="NZ_WUCM01000060.1"/>
</dbReference>
<dbReference type="RefSeq" id="YP_002348217.1">
    <property type="nucleotide sequence ID" value="NC_003143.1"/>
</dbReference>
<dbReference type="SMR" id="Q9X6B2"/>
<dbReference type="STRING" id="214092.YPO3321"/>
<dbReference type="PaxDb" id="214092-YPO3321"/>
<dbReference type="EnsemblBacteria" id="AAS60638">
    <property type="protein sequence ID" value="AAS60638"/>
    <property type="gene ID" value="YP_0365"/>
</dbReference>
<dbReference type="GeneID" id="57975388"/>
<dbReference type="KEGG" id="ype:YPO3321"/>
<dbReference type="KEGG" id="ypk:y0868"/>
<dbReference type="KEGG" id="ypm:YP_0365"/>
<dbReference type="PATRIC" id="fig|1028802.3.peg.1310"/>
<dbReference type="eggNOG" id="COG3038">
    <property type="taxonomic scope" value="Bacteria"/>
</dbReference>
<dbReference type="HOGENOM" id="CLU_095321_3_0_6"/>
<dbReference type="OrthoDB" id="8589936at2"/>
<dbReference type="Proteomes" id="UP000000815">
    <property type="component" value="Chromosome"/>
</dbReference>
<dbReference type="Proteomes" id="UP000001019">
    <property type="component" value="Chromosome"/>
</dbReference>
<dbReference type="Proteomes" id="UP000002490">
    <property type="component" value="Chromosome"/>
</dbReference>
<dbReference type="GO" id="GO:0005886">
    <property type="term" value="C:plasma membrane"/>
    <property type="evidence" value="ECO:0000318"/>
    <property type="project" value="GO_Central"/>
</dbReference>
<dbReference type="GO" id="GO:0009055">
    <property type="term" value="F:electron transfer activity"/>
    <property type="evidence" value="ECO:0007669"/>
    <property type="project" value="InterPro"/>
</dbReference>
<dbReference type="GO" id="GO:0020037">
    <property type="term" value="F:heme binding"/>
    <property type="evidence" value="ECO:0000318"/>
    <property type="project" value="GO_Central"/>
</dbReference>
<dbReference type="GO" id="GO:0046872">
    <property type="term" value="F:metal ion binding"/>
    <property type="evidence" value="ECO:0007669"/>
    <property type="project" value="UniProtKB-KW"/>
</dbReference>
<dbReference type="GO" id="GO:0016491">
    <property type="term" value="F:oxidoreductase activity"/>
    <property type="evidence" value="ECO:0007669"/>
    <property type="project" value="UniProtKB-KW"/>
</dbReference>
<dbReference type="GO" id="GO:0022904">
    <property type="term" value="P:respiratory electron transport chain"/>
    <property type="evidence" value="ECO:0007669"/>
    <property type="project" value="InterPro"/>
</dbReference>
<dbReference type="InterPro" id="IPR011577">
    <property type="entry name" value="Cyt_b561_bac/Ni-Hgenase"/>
</dbReference>
<dbReference type="InterPro" id="IPR052168">
    <property type="entry name" value="Cytochrome_b561_oxidase"/>
</dbReference>
<dbReference type="InterPro" id="IPR016174">
    <property type="entry name" value="Di-haem_cyt_TM"/>
</dbReference>
<dbReference type="NCBIfam" id="NF008566">
    <property type="entry name" value="PRK11513.1"/>
    <property type="match status" value="1"/>
</dbReference>
<dbReference type="PANTHER" id="PTHR30529">
    <property type="entry name" value="CYTOCHROME B561"/>
    <property type="match status" value="1"/>
</dbReference>
<dbReference type="PANTHER" id="PTHR30529:SF4">
    <property type="entry name" value="SUPEROXIDE OXIDASE CYBB"/>
    <property type="match status" value="1"/>
</dbReference>
<dbReference type="Pfam" id="PF01292">
    <property type="entry name" value="Ni_hydr_CYTB"/>
    <property type="match status" value="1"/>
</dbReference>
<dbReference type="SUPFAM" id="SSF81342">
    <property type="entry name" value="Transmembrane di-heme cytochromes"/>
    <property type="match status" value="1"/>
</dbReference>
<comment type="function">
    <text evidence="1">B-type di-heme cytochrome. Catalyzes the oxidation of superoxide to molecular oxygen and transfers the extracted electrons to ubiquinone through the two hemes.</text>
</comment>
<comment type="catalytic activity">
    <reaction evidence="1">
        <text>a ubiquinol + 2 O2 = 2 superoxide + a ubiquinone + 2 H(+)</text>
        <dbReference type="Rhea" id="RHEA:29171"/>
        <dbReference type="Rhea" id="RHEA-COMP:9565"/>
        <dbReference type="Rhea" id="RHEA-COMP:9566"/>
        <dbReference type="ChEBI" id="CHEBI:15378"/>
        <dbReference type="ChEBI" id="CHEBI:15379"/>
        <dbReference type="ChEBI" id="CHEBI:16389"/>
        <dbReference type="ChEBI" id="CHEBI:17976"/>
        <dbReference type="ChEBI" id="CHEBI:18421"/>
        <dbReference type="EC" id="1.10.3.17"/>
    </reaction>
</comment>
<comment type="cofactor">
    <cofactor evidence="1">
        <name>heme b</name>
        <dbReference type="ChEBI" id="CHEBI:60344"/>
    </cofactor>
    <text evidence="1">Binds 2 heme b (iron-protoporphyrin IX) groups per molecule.</text>
</comment>
<comment type="subcellular location">
    <subcellularLocation>
        <location evidence="1">Cell inner membrane</location>
        <topology evidence="2">Multi-pass membrane protein</topology>
    </subcellularLocation>
</comment>
<comment type="similarity">
    <text evidence="3">Belongs to the cytochrome b561 family.</text>
</comment>
<comment type="sequence caution" evidence="3">
    <conflict type="erroneous initiation">
        <sequence resource="EMBL-CDS" id="AAM84453"/>
    </conflict>
</comment>
<comment type="sequence caution" evidence="3">
    <conflict type="erroneous initiation">
        <sequence resource="EMBL-CDS" id="AAS60638"/>
    </conflict>
</comment>
<proteinExistence type="inferred from homology"/>
<gene>
    <name type="primary">cybB</name>
    <name type="synonym">cybB1</name>
    <name type="ordered locus">YPO3321</name>
    <name type="ordered locus">y0868</name>
    <name type="ordered locus">YP_0365</name>
</gene>
<keyword id="KW-0997">Cell inner membrane</keyword>
<keyword id="KW-1003">Cell membrane</keyword>
<keyword id="KW-0249">Electron transport</keyword>
<keyword id="KW-0349">Heme</keyword>
<keyword id="KW-0408">Iron</keyword>
<keyword id="KW-0472">Membrane</keyword>
<keyword id="KW-0479">Metal-binding</keyword>
<keyword id="KW-0560">Oxidoreductase</keyword>
<keyword id="KW-1185">Reference proteome</keyword>
<keyword id="KW-0812">Transmembrane</keyword>
<keyword id="KW-1133">Transmembrane helix</keyword>
<keyword id="KW-0813">Transport</keyword>
<evidence type="ECO:0000250" key="1">
    <source>
        <dbReference type="UniProtKB" id="P0ABE5"/>
    </source>
</evidence>
<evidence type="ECO:0000255" key="2"/>
<evidence type="ECO:0000305" key="3"/>